<comment type="function">
    <text>Needed for flagellar regrowth and assembly.</text>
</comment>
<comment type="subcellular location">
    <subcellularLocation>
        <location evidence="1">Cytoplasm</location>
    </subcellularLocation>
</comment>
<comment type="similarity">
    <text evidence="1">Belongs to the FliH family.</text>
</comment>
<gene>
    <name type="primary">fliH</name>
    <name type="synonym">fla AII.3</name>
    <name type="synonym">fla BIII</name>
    <name type="ordered locus">b1940</name>
    <name type="ordered locus">JW1924</name>
</gene>
<accession>P31068</accession>
<accession>P76325</accession>
<proteinExistence type="inferred from homology"/>
<evidence type="ECO:0000305" key="1"/>
<keyword id="KW-1005">Bacterial flagellum biogenesis</keyword>
<keyword id="KW-1006">Bacterial flagellum protein export</keyword>
<keyword id="KW-0963">Cytoplasm</keyword>
<keyword id="KW-0653">Protein transport</keyword>
<keyword id="KW-1185">Reference proteome</keyword>
<keyword id="KW-0813">Transport</keyword>
<protein>
    <recommendedName>
        <fullName>Flagellar assembly protein FliH</fullName>
    </recommendedName>
</protein>
<dbReference type="EMBL" id="U00096">
    <property type="protein sequence ID" value="AAC75007.2"/>
    <property type="molecule type" value="Genomic_DNA"/>
</dbReference>
<dbReference type="EMBL" id="AP009048">
    <property type="protein sequence ID" value="BAA15765.1"/>
    <property type="molecule type" value="Genomic_DNA"/>
</dbReference>
<dbReference type="EMBL" id="L13243">
    <property type="status" value="NOT_ANNOTATED_CDS"/>
    <property type="molecule type" value="Genomic_DNA"/>
</dbReference>
<dbReference type="EMBL" id="L49147">
    <property type="protein sequence ID" value="AAA82636.1"/>
    <property type="molecule type" value="Genomic_DNA"/>
</dbReference>
<dbReference type="PIR" id="A64958">
    <property type="entry name" value="A64958"/>
</dbReference>
<dbReference type="RefSeq" id="NP_416450.2">
    <property type="nucleotide sequence ID" value="NC_000913.3"/>
</dbReference>
<dbReference type="RefSeq" id="WP_001282683.1">
    <property type="nucleotide sequence ID" value="NZ_LN832404.1"/>
</dbReference>
<dbReference type="SMR" id="P31068"/>
<dbReference type="BioGRID" id="4260385">
    <property type="interactions" value="37"/>
</dbReference>
<dbReference type="ComplexPortal" id="CPX-5885">
    <property type="entry name" value="Flagellar export complex"/>
</dbReference>
<dbReference type="DIP" id="DIP-9654N"/>
<dbReference type="FunCoup" id="P31068">
    <property type="interactions" value="43"/>
</dbReference>
<dbReference type="IntAct" id="P31068">
    <property type="interactions" value="12"/>
</dbReference>
<dbReference type="STRING" id="511145.b1940"/>
<dbReference type="PaxDb" id="511145-b1940"/>
<dbReference type="EnsemblBacteria" id="AAC75007">
    <property type="protein sequence ID" value="AAC75007"/>
    <property type="gene ID" value="b1940"/>
</dbReference>
<dbReference type="GeneID" id="946456"/>
<dbReference type="KEGG" id="ecj:JW1924"/>
<dbReference type="KEGG" id="eco:b1940"/>
<dbReference type="KEGG" id="ecoc:C3026_10990"/>
<dbReference type="PATRIC" id="fig|1411691.4.peg.311"/>
<dbReference type="EchoBASE" id="EB1608"/>
<dbReference type="eggNOG" id="COG1317">
    <property type="taxonomic scope" value="Bacteria"/>
</dbReference>
<dbReference type="HOGENOM" id="CLU_062625_4_2_6"/>
<dbReference type="InParanoid" id="P31068"/>
<dbReference type="OMA" id="WALPSFD"/>
<dbReference type="OrthoDB" id="6415116at2"/>
<dbReference type="PhylomeDB" id="P31068"/>
<dbReference type="BioCyc" id="EcoCyc:EG11656-MONOMER"/>
<dbReference type="PRO" id="PR:P31068"/>
<dbReference type="Proteomes" id="UP000000625">
    <property type="component" value="Chromosome"/>
</dbReference>
<dbReference type="GO" id="GO:0009288">
    <property type="term" value="C:bacterial-type flagellum"/>
    <property type="evidence" value="ECO:0000303"/>
    <property type="project" value="ComplexPortal"/>
</dbReference>
<dbReference type="GO" id="GO:0120102">
    <property type="term" value="C:bacterial-type flagellum secretion apparatus"/>
    <property type="evidence" value="ECO:0000303"/>
    <property type="project" value="ComplexPortal"/>
</dbReference>
<dbReference type="GO" id="GO:0005829">
    <property type="term" value="C:cytosol"/>
    <property type="evidence" value="ECO:0000314"/>
    <property type="project" value="EcoCyc"/>
</dbReference>
<dbReference type="GO" id="GO:0030257">
    <property type="term" value="C:type III protein secretion system complex"/>
    <property type="evidence" value="ECO:0000303"/>
    <property type="project" value="ComplexPortal"/>
</dbReference>
<dbReference type="GO" id="GO:0003774">
    <property type="term" value="F:cytoskeletal motor activity"/>
    <property type="evidence" value="ECO:0007669"/>
    <property type="project" value="InterPro"/>
</dbReference>
<dbReference type="GO" id="GO:0044781">
    <property type="term" value="P:bacterial-type flagellum organization"/>
    <property type="evidence" value="ECO:0007669"/>
    <property type="project" value="UniProtKB-KW"/>
</dbReference>
<dbReference type="GO" id="GO:0071973">
    <property type="term" value="P:bacterial-type flagellum-dependent cell motility"/>
    <property type="evidence" value="ECO:0000303"/>
    <property type="project" value="ComplexPortal"/>
</dbReference>
<dbReference type="GO" id="GO:0006935">
    <property type="term" value="P:chemotaxis"/>
    <property type="evidence" value="ECO:0000303"/>
    <property type="project" value="ComplexPortal"/>
</dbReference>
<dbReference type="GO" id="GO:0030254">
    <property type="term" value="P:protein secretion by the type III secretion system"/>
    <property type="evidence" value="ECO:0000303"/>
    <property type="project" value="ComplexPortal"/>
</dbReference>
<dbReference type="InterPro" id="IPR000563">
    <property type="entry name" value="Flag_FliH"/>
</dbReference>
<dbReference type="InterPro" id="IPR018035">
    <property type="entry name" value="Flagellar_FliH/T3SS_HrpE"/>
</dbReference>
<dbReference type="InterPro" id="IPR051472">
    <property type="entry name" value="T3SS_Stator/FliH"/>
</dbReference>
<dbReference type="NCBIfam" id="NF004266">
    <property type="entry name" value="PRK05687.1-1"/>
    <property type="match status" value="1"/>
</dbReference>
<dbReference type="PANTHER" id="PTHR34982:SF1">
    <property type="entry name" value="FLAGELLAR ASSEMBLY PROTEIN FLIH"/>
    <property type="match status" value="1"/>
</dbReference>
<dbReference type="PANTHER" id="PTHR34982">
    <property type="entry name" value="YOP PROTEINS TRANSLOCATION PROTEIN L"/>
    <property type="match status" value="1"/>
</dbReference>
<dbReference type="Pfam" id="PF02108">
    <property type="entry name" value="FliH"/>
    <property type="match status" value="1"/>
</dbReference>
<dbReference type="PRINTS" id="PR01003">
    <property type="entry name" value="FLGFLIH"/>
</dbReference>
<organism>
    <name type="scientific">Escherichia coli (strain K12)</name>
    <dbReference type="NCBI Taxonomy" id="83333"/>
    <lineage>
        <taxon>Bacteria</taxon>
        <taxon>Pseudomonadati</taxon>
        <taxon>Pseudomonadota</taxon>
        <taxon>Gammaproteobacteria</taxon>
        <taxon>Enterobacterales</taxon>
        <taxon>Enterobacteriaceae</taxon>
        <taxon>Escherichia</taxon>
    </lineage>
</organism>
<reference key="1">
    <citation type="journal article" date="1996" name="DNA Res.">
        <title>A 460-kb DNA sequence of the Escherichia coli K-12 genome corresponding to the 40.1-50.0 min region on the linkage map.</title>
        <authorList>
            <person name="Itoh T."/>
            <person name="Aiba H."/>
            <person name="Baba T."/>
            <person name="Fujita K."/>
            <person name="Hayashi K."/>
            <person name="Inada T."/>
            <person name="Isono K."/>
            <person name="Kasai H."/>
            <person name="Kimura S."/>
            <person name="Kitakawa M."/>
            <person name="Kitagawa M."/>
            <person name="Makino K."/>
            <person name="Miki T."/>
            <person name="Mizobuchi K."/>
            <person name="Mori H."/>
            <person name="Mori T."/>
            <person name="Motomura K."/>
            <person name="Nakade S."/>
            <person name="Nakamura Y."/>
            <person name="Nashimoto H."/>
            <person name="Nishio Y."/>
            <person name="Oshima T."/>
            <person name="Saito N."/>
            <person name="Sampei G."/>
            <person name="Seki Y."/>
            <person name="Sivasundaram S."/>
            <person name="Tagami H."/>
            <person name="Takeda J."/>
            <person name="Takemoto K."/>
            <person name="Wada C."/>
            <person name="Yamamoto Y."/>
            <person name="Horiuchi T."/>
        </authorList>
    </citation>
    <scope>NUCLEOTIDE SEQUENCE [LARGE SCALE GENOMIC DNA]</scope>
    <source>
        <strain>K12 / W3110 / ATCC 27325 / DSM 5911</strain>
    </source>
</reference>
<reference key="2">
    <citation type="journal article" date="1997" name="Science">
        <title>The complete genome sequence of Escherichia coli K-12.</title>
        <authorList>
            <person name="Blattner F.R."/>
            <person name="Plunkett G. III"/>
            <person name="Bloch C.A."/>
            <person name="Perna N.T."/>
            <person name="Burland V."/>
            <person name="Riley M."/>
            <person name="Collado-Vides J."/>
            <person name="Glasner J.D."/>
            <person name="Rode C.K."/>
            <person name="Mayhew G.F."/>
            <person name="Gregor J."/>
            <person name="Davis N.W."/>
            <person name="Kirkpatrick H.A."/>
            <person name="Goeden M.A."/>
            <person name="Rose D.J."/>
            <person name="Mau B."/>
            <person name="Shao Y."/>
        </authorList>
    </citation>
    <scope>NUCLEOTIDE SEQUENCE [LARGE SCALE GENOMIC DNA]</scope>
    <source>
        <strain>K12 / MG1655 / ATCC 47076</strain>
    </source>
</reference>
<reference key="3">
    <citation type="journal article" date="2006" name="Mol. Syst. Biol.">
        <title>Highly accurate genome sequences of Escherichia coli K-12 strains MG1655 and W3110.</title>
        <authorList>
            <person name="Hayashi K."/>
            <person name="Morooka N."/>
            <person name="Yamamoto Y."/>
            <person name="Fujita K."/>
            <person name="Isono K."/>
            <person name="Choi S."/>
            <person name="Ohtsubo E."/>
            <person name="Baba T."/>
            <person name="Wanner B.L."/>
            <person name="Mori H."/>
            <person name="Horiuchi T."/>
        </authorList>
    </citation>
    <scope>NUCLEOTIDE SEQUENCE [LARGE SCALE GENOMIC DNA]</scope>
    <source>
        <strain>K12 / W3110 / ATCC 27325 / DSM 5911</strain>
    </source>
</reference>
<reference key="4">
    <citation type="journal article" date="1993" name="Gene">
        <title>Gene sequence, overproduction, purification and determination of the wild-type level of the Escherichia coli flagellar switch protein FliG.</title>
        <authorList>
            <person name="Roman S.J."/>
            <person name="Frantz B.B."/>
            <person name="Matsumura P."/>
        </authorList>
    </citation>
    <scope>NUCLEOTIDE SEQUENCE [GENOMIC DNA] OF 1-14</scope>
</reference>
<reference key="5">
    <citation type="submission" date="1995-11" db="EMBL/GenBank/DDBJ databases">
        <authorList>
            <person name="Macnab R.M."/>
        </authorList>
    </citation>
    <scope>NUCLEOTIDE SEQUENCE [GENOMIC DNA] OF 197-228</scope>
    <source>
        <strain>K12</strain>
    </source>
</reference>
<name>FLIH_ECOLI</name>
<feature type="chain" id="PRO_0000180893" description="Flagellar assembly protein FliH">
    <location>
        <begin position="1"/>
        <end position="228"/>
    </location>
</feature>
<feature type="sequence conflict" description="In Ref. 4; L13243." evidence="1" ref="4">
    <original>D</original>
    <variation>N</variation>
    <location>
        <position position="3"/>
    </location>
</feature>
<sequence>MSDNLPWKTWTPDDLAPPQAEFVPIVEPEETIIEEAEPSLEQQLAQLQMQAHEQGYQAGIAEGRQQGHKQGYQEGLAQGLEQGLAEAKSQQAPIHARMQQLVSEFQTTLDALDSVIASRLMQMALEAARQVIGQTPTVDNSALIKQIQQLLQQEPLFSGKPQLRVHPDDLQRVDDMLGATLSLHGWRLRGDPTLHPGGCKVSADEGDLDASVATRWQELCRLAAPGVV</sequence>